<proteinExistence type="inferred from homology"/>
<reference key="1">
    <citation type="journal article" date="2004" name="Nucleic Acids Res.">
        <title>The genome sequence of Bacillus cereus ATCC 10987 reveals metabolic adaptations and a large plasmid related to Bacillus anthracis pXO1.</title>
        <authorList>
            <person name="Rasko D.A."/>
            <person name="Ravel J."/>
            <person name="Oekstad O.A."/>
            <person name="Helgason E."/>
            <person name="Cer R.Z."/>
            <person name="Jiang L."/>
            <person name="Shores K.A."/>
            <person name="Fouts D.E."/>
            <person name="Tourasse N.J."/>
            <person name="Angiuoli S.V."/>
            <person name="Kolonay J.F."/>
            <person name="Nelson W.C."/>
            <person name="Kolstoe A.-B."/>
            <person name="Fraser C.M."/>
            <person name="Read T.D."/>
        </authorList>
    </citation>
    <scope>NUCLEOTIDE SEQUENCE [LARGE SCALE GENOMIC DNA]</scope>
    <source>
        <strain>ATCC 10987 / NRS 248</strain>
    </source>
</reference>
<name>GLCU_BACC1</name>
<dbReference type="EMBL" id="AE017194">
    <property type="protein sequence ID" value="AAS43760.1"/>
    <property type="molecule type" value="Genomic_DNA"/>
</dbReference>
<dbReference type="SMR" id="P61402"/>
<dbReference type="KEGG" id="bca:BCE_4859"/>
<dbReference type="HOGENOM" id="CLU_076024_0_0_9"/>
<dbReference type="Proteomes" id="UP000002527">
    <property type="component" value="Chromosome"/>
</dbReference>
<dbReference type="GO" id="GO:0005886">
    <property type="term" value="C:plasma membrane"/>
    <property type="evidence" value="ECO:0007669"/>
    <property type="project" value="UniProtKB-SubCell"/>
</dbReference>
<dbReference type="GO" id="GO:0015144">
    <property type="term" value="F:carbohydrate transmembrane transporter activity"/>
    <property type="evidence" value="ECO:0007669"/>
    <property type="project" value="InterPro"/>
</dbReference>
<dbReference type="CDD" id="cd23112">
    <property type="entry name" value="glucose_uptake_GlcU"/>
    <property type="match status" value="1"/>
</dbReference>
<dbReference type="InterPro" id="IPR010651">
    <property type="entry name" value="Sugar_transport"/>
</dbReference>
<dbReference type="NCBIfam" id="TIGR00776">
    <property type="entry name" value="RhaT"/>
    <property type="match status" value="1"/>
</dbReference>
<dbReference type="PANTHER" id="PTHR16119">
    <property type="entry name" value="TRANSMEMBRANE PROTEIN 144"/>
    <property type="match status" value="1"/>
</dbReference>
<dbReference type="PANTHER" id="PTHR16119:SF17">
    <property type="entry name" value="TRANSMEMBRANE PROTEIN 144"/>
    <property type="match status" value="1"/>
</dbReference>
<dbReference type="Pfam" id="PF06800">
    <property type="entry name" value="Sugar_transport"/>
    <property type="match status" value="1"/>
</dbReference>
<dbReference type="SUPFAM" id="SSF103481">
    <property type="entry name" value="Multidrug resistance efflux transporter EmrE"/>
    <property type="match status" value="2"/>
</dbReference>
<feature type="chain" id="PRO_0000213620" description="Probable glucose uptake protein GlcU">
    <location>
        <begin position="1"/>
        <end position="285"/>
    </location>
</feature>
<feature type="transmembrane region" description="Helical" evidence="2">
    <location>
        <begin position="4"/>
        <end position="21"/>
    </location>
</feature>
<feature type="transmembrane region" description="Helical" evidence="2">
    <location>
        <begin position="26"/>
        <end position="48"/>
    </location>
</feature>
<feature type="transmembrane region" description="Helical" evidence="2">
    <location>
        <begin position="52"/>
        <end position="71"/>
    </location>
</feature>
<feature type="transmembrane region" description="Helical" evidence="2">
    <location>
        <begin position="84"/>
        <end position="106"/>
    </location>
</feature>
<feature type="transmembrane region" description="Helical" evidence="2">
    <location>
        <begin position="110"/>
        <end position="132"/>
    </location>
</feature>
<feature type="transmembrane region" description="Helical" evidence="2">
    <location>
        <begin position="153"/>
        <end position="175"/>
    </location>
</feature>
<feature type="transmembrane region" description="Helical" evidence="2">
    <location>
        <begin position="180"/>
        <end position="197"/>
    </location>
</feature>
<feature type="transmembrane region" description="Helical" evidence="2">
    <location>
        <begin position="210"/>
        <end position="227"/>
    </location>
</feature>
<feature type="transmembrane region" description="Helical" evidence="2">
    <location>
        <begin position="232"/>
        <end position="254"/>
    </location>
</feature>
<feature type="transmembrane region" description="Helical" evidence="2">
    <location>
        <begin position="266"/>
        <end position="283"/>
    </location>
</feature>
<sequence>MDIFLAILPAIFWGSIVLFNVKLGGGPYSQTLGTTFGALIFSIVVYIFMKPVLTPTVIGVGIVSGLFWALGQANQLKSIDLMGVSRTMPISTGLQLVATTLFGVIVFHEWSTTISVVLGVLALVCIIIGVILTSLQSEEEKNAEQAGNFKRGIIILLISTVGYLVYVVVIRLFNVDGWSALLPQAVGMVLGGILLTFKHHPFNKYAIRNIIPGLIWAAGNMFLFISQPRVGVATSFSLSQMGIIISTLGGILILGERKTKRQLTGIVVGIVFIIAAGIMLGIAKS</sequence>
<gene>
    <name type="primary">glcU</name>
    <name type="ordered locus">BCE_4859</name>
</gene>
<accession>P61402</accession>
<organism>
    <name type="scientific">Bacillus cereus (strain ATCC 10987 / NRS 248)</name>
    <dbReference type="NCBI Taxonomy" id="222523"/>
    <lineage>
        <taxon>Bacteria</taxon>
        <taxon>Bacillati</taxon>
        <taxon>Bacillota</taxon>
        <taxon>Bacilli</taxon>
        <taxon>Bacillales</taxon>
        <taxon>Bacillaceae</taxon>
        <taxon>Bacillus</taxon>
        <taxon>Bacillus cereus group</taxon>
    </lineage>
</organism>
<protein>
    <recommendedName>
        <fullName>Probable glucose uptake protein GlcU</fullName>
    </recommendedName>
</protein>
<evidence type="ECO:0000250" key="1"/>
<evidence type="ECO:0000255" key="2"/>
<evidence type="ECO:0000305" key="3"/>
<keyword id="KW-1003">Cell membrane</keyword>
<keyword id="KW-0472">Membrane</keyword>
<keyword id="KW-0762">Sugar transport</keyword>
<keyword id="KW-0812">Transmembrane</keyword>
<keyword id="KW-1133">Transmembrane helix</keyword>
<keyword id="KW-0813">Transport</keyword>
<comment type="function">
    <text evidence="1">Involved in the uptake of glucose.</text>
</comment>
<comment type="subcellular location">
    <subcellularLocation>
        <location evidence="3">Cell membrane</location>
        <topology evidence="3">Multi-pass membrane protein</topology>
    </subcellularLocation>
</comment>
<comment type="similarity">
    <text evidence="3">Belongs to the GRP transporter (TC 2.A.7.5) family.</text>
</comment>